<dbReference type="EMBL" id="AF160519">
    <property type="protein sequence ID" value="AAF15135.1"/>
    <property type="molecule type" value="Genomic_DNA"/>
</dbReference>
<dbReference type="SMR" id="Q9T7T7"/>
<dbReference type="GO" id="GO:0005743">
    <property type="term" value="C:mitochondrial inner membrane"/>
    <property type="evidence" value="ECO:0007669"/>
    <property type="project" value="UniProtKB-SubCell"/>
</dbReference>
<dbReference type="GO" id="GO:0045275">
    <property type="term" value="C:respiratory chain complex III"/>
    <property type="evidence" value="ECO:0007669"/>
    <property type="project" value="InterPro"/>
</dbReference>
<dbReference type="GO" id="GO:0046872">
    <property type="term" value="F:metal ion binding"/>
    <property type="evidence" value="ECO:0007669"/>
    <property type="project" value="UniProtKB-KW"/>
</dbReference>
<dbReference type="GO" id="GO:0008121">
    <property type="term" value="F:ubiquinol-cytochrome-c reductase activity"/>
    <property type="evidence" value="ECO:0007669"/>
    <property type="project" value="InterPro"/>
</dbReference>
<dbReference type="GO" id="GO:0006122">
    <property type="term" value="P:mitochondrial electron transport, ubiquinol to cytochrome c"/>
    <property type="evidence" value="ECO:0007669"/>
    <property type="project" value="TreeGrafter"/>
</dbReference>
<dbReference type="CDD" id="cd00290">
    <property type="entry name" value="cytochrome_b_C"/>
    <property type="match status" value="1"/>
</dbReference>
<dbReference type="CDD" id="cd00284">
    <property type="entry name" value="Cytochrome_b_N"/>
    <property type="match status" value="1"/>
</dbReference>
<dbReference type="FunFam" id="1.20.810.10:FF:000002">
    <property type="entry name" value="Cytochrome b"/>
    <property type="match status" value="1"/>
</dbReference>
<dbReference type="Gene3D" id="1.20.810.10">
    <property type="entry name" value="Cytochrome Bc1 Complex, Chain C"/>
    <property type="match status" value="1"/>
</dbReference>
<dbReference type="InterPro" id="IPR005798">
    <property type="entry name" value="Cyt_b/b6_C"/>
</dbReference>
<dbReference type="InterPro" id="IPR036150">
    <property type="entry name" value="Cyt_b/b6_C_sf"/>
</dbReference>
<dbReference type="InterPro" id="IPR005797">
    <property type="entry name" value="Cyt_b/b6_N"/>
</dbReference>
<dbReference type="InterPro" id="IPR027387">
    <property type="entry name" value="Cytb/b6-like_sf"/>
</dbReference>
<dbReference type="InterPro" id="IPR030689">
    <property type="entry name" value="Cytochrome_b"/>
</dbReference>
<dbReference type="InterPro" id="IPR048260">
    <property type="entry name" value="Cytochrome_b_C_euk/bac"/>
</dbReference>
<dbReference type="InterPro" id="IPR048259">
    <property type="entry name" value="Cytochrome_b_N_euk/bac"/>
</dbReference>
<dbReference type="InterPro" id="IPR016174">
    <property type="entry name" value="Di-haem_cyt_TM"/>
</dbReference>
<dbReference type="PANTHER" id="PTHR19271">
    <property type="entry name" value="CYTOCHROME B"/>
    <property type="match status" value="1"/>
</dbReference>
<dbReference type="PANTHER" id="PTHR19271:SF16">
    <property type="entry name" value="CYTOCHROME B"/>
    <property type="match status" value="1"/>
</dbReference>
<dbReference type="Pfam" id="PF00032">
    <property type="entry name" value="Cytochrom_B_C"/>
    <property type="match status" value="1"/>
</dbReference>
<dbReference type="Pfam" id="PF00033">
    <property type="entry name" value="Cytochrome_B"/>
    <property type="match status" value="1"/>
</dbReference>
<dbReference type="PIRSF" id="PIRSF038885">
    <property type="entry name" value="COB"/>
    <property type="match status" value="1"/>
</dbReference>
<dbReference type="SUPFAM" id="SSF81648">
    <property type="entry name" value="a domain/subunit of cytochrome bc1 complex (Ubiquinol-cytochrome c reductase)"/>
    <property type="match status" value="1"/>
</dbReference>
<dbReference type="SUPFAM" id="SSF81342">
    <property type="entry name" value="Transmembrane di-heme cytochromes"/>
    <property type="match status" value="1"/>
</dbReference>
<dbReference type="PROSITE" id="PS51003">
    <property type="entry name" value="CYTB_CTER"/>
    <property type="match status" value="1"/>
</dbReference>
<dbReference type="PROSITE" id="PS51002">
    <property type="entry name" value="CYTB_NTER"/>
    <property type="match status" value="1"/>
</dbReference>
<gene>
    <name type="primary">MT-CYB</name>
    <name type="synonym">COB</name>
    <name type="synonym">CYTB</name>
    <name type="synonym">MTCYB</name>
</gene>
<feature type="chain" id="PRO_0000060687" description="Cytochrome b">
    <location>
        <begin position="1"/>
        <end position="380"/>
    </location>
</feature>
<feature type="transmembrane region" description="Helical" evidence="2">
    <location>
        <begin position="33"/>
        <end position="53"/>
    </location>
</feature>
<feature type="transmembrane region" description="Helical" evidence="2">
    <location>
        <begin position="77"/>
        <end position="98"/>
    </location>
</feature>
<feature type="transmembrane region" description="Helical" evidence="2">
    <location>
        <begin position="113"/>
        <end position="133"/>
    </location>
</feature>
<feature type="transmembrane region" description="Helical" evidence="2">
    <location>
        <begin position="178"/>
        <end position="198"/>
    </location>
</feature>
<feature type="transmembrane region" description="Helical" evidence="2">
    <location>
        <begin position="226"/>
        <end position="246"/>
    </location>
</feature>
<feature type="transmembrane region" description="Helical" evidence="2">
    <location>
        <begin position="288"/>
        <end position="308"/>
    </location>
</feature>
<feature type="transmembrane region" description="Helical" evidence="2">
    <location>
        <begin position="320"/>
        <end position="340"/>
    </location>
</feature>
<feature type="transmembrane region" description="Helical" evidence="2">
    <location>
        <begin position="347"/>
        <end position="367"/>
    </location>
</feature>
<feature type="binding site" description="axial binding residue" evidence="2">
    <location>
        <position position="83"/>
    </location>
    <ligand>
        <name>heme b</name>
        <dbReference type="ChEBI" id="CHEBI:60344"/>
        <label>b562</label>
    </ligand>
    <ligandPart>
        <name>Fe</name>
        <dbReference type="ChEBI" id="CHEBI:18248"/>
    </ligandPart>
</feature>
<feature type="binding site" description="axial binding residue" evidence="2">
    <location>
        <position position="97"/>
    </location>
    <ligand>
        <name>heme b</name>
        <dbReference type="ChEBI" id="CHEBI:60344"/>
        <label>b566</label>
    </ligand>
    <ligandPart>
        <name>Fe</name>
        <dbReference type="ChEBI" id="CHEBI:18248"/>
    </ligandPart>
</feature>
<feature type="binding site" description="axial binding residue" evidence="2">
    <location>
        <position position="182"/>
    </location>
    <ligand>
        <name>heme b</name>
        <dbReference type="ChEBI" id="CHEBI:60344"/>
        <label>b562</label>
    </ligand>
    <ligandPart>
        <name>Fe</name>
        <dbReference type="ChEBI" id="CHEBI:18248"/>
    </ligandPart>
</feature>
<feature type="binding site" description="axial binding residue" evidence="2">
    <location>
        <position position="196"/>
    </location>
    <ligand>
        <name>heme b</name>
        <dbReference type="ChEBI" id="CHEBI:60344"/>
        <label>b566</label>
    </ligand>
    <ligandPart>
        <name>Fe</name>
        <dbReference type="ChEBI" id="CHEBI:18248"/>
    </ligandPart>
</feature>
<feature type="binding site" evidence="2">
    <location>
        <position position="201"/>
    </location>
    <ligand>
        <name>a ubiquinone</name>
        <dbReference type="ChEBI" id="CHEBI:16389"/>
    </ligand>
</feature>
<evidence type="ECO:0000250" key="1"/>
<evidence type="ECO:0000250" key="2">
    <source>
        <dbReference type="UniProtKB" id="P00157"/>
    </source>
</evidence>
<evidence type="ECO:0000255" key="3">
    <source>
        <dbReference type="PROSITE-ProRule" id="PRU00967"/>
    </source>
</evidence>
<evidence type="ECO:0000255" key="4">
    <source>
        <dbReference type="PROSITE-ProRule" id="PRU00968"/>
    </source>
</evidence>
<accession>Q9T7T7</accession>
<name>CYB_BRAAL</name>
<comment type="function">
    <text evidence="2">Component of the ubiquinol-cytochrome c reductase complex (complex III or cytochrome b-c1 complex) that is part of the mitochondrial respiratory chain. The b-c1 complex mediates electron transfer from ubiquinol to cytochrome c. Contributes to the generation of a proton gradient across the mitochondrial membrane that is then used for ATP synthesis.</text>
</comment>
<comment type="cofactor">
    <cofactor evidence="2">
        <name>heme b</name>
        <dbReference type="ChEBI" id="CHEBI:60344"/>
    </cofactor>
    <text evidence="2">Binds 2 heme b groups non-covalently.</text>
</comment>
<comment type="subunit">
    <text evidence="2">The cytochrome bc1 complex contains 11 subunits: 3 respiratory subunits (MT-CYB, CYC1 and UQCRFS1), 2 core proteins (UQCRC1 and UQCRC2) and 6 low-molecular weight proteins (UQCRH/QCR6, UQCRB/QCR7, UQCRQ/QCR8, UQCR10/QCR9, UQCR11/QCR10 and a cleavage product of UQCRFS1). This cytochrome bc1 complex then forms a dimer.</text>
</comment>
<comment type="subcellular location">
    <subcellularLocation>
        <location evidence="2">Mitochondrion inner membrane</location>
        <topology evidence="2">Multi-pass membrane protein</topology>
    </subcellularLocation>
</comment>
<comment type="miscellaneous">
    <text evidence="1">Heme 1 (or BL or b562) is low-potential and absorbs at about 562 nm, and heme 2 (or BH or b566) is high-potential and absorbs at about 566 nm.</text>
</comment>
<comment type="similarity">
    <text evidence="3 4">Belongs to the cytochrome b family.</text>
</comment>
<comment type="caution">
    <text evidence="2">The full-length protein contains only eight transmembrane helices, not nine as predicted by bioinformatics tools.</text>
</comment>
<reference key="1">
    <citation type="journal article" date="1999" name="Cladistics">
        <title>Molecular phylogeny and biogeography of Madagascar's native rodents (Muridae: Nesomyinae): a test of the single origin hypothesis.</title>
        <authorList>
            <person name="Jansa S.A."/>
            <person name="Goodman S.M."/>
            <person name="Tucker P.K."/>
        </authorList>
    </citation>
    <scope>NUCLEOTIDE SEQUENCE [GENOMIC DNA]</scope>
    <source>
        <strain>Isolate Btalb502</strain>
    </source>
</reference>
<protein>
    <recommendedName>
        <fullName>Cytochrome b</fullName>
    </recommendedName>
    <alternativeName>
        <fullName>Complex III subunit 3</fullName>
    </alternativeName>
    <alternativeName>
        <fullName>Complex III subunit III</fullName>
    </alternativeName>
    <alternativeName>
        <fullName>Cytochrome b-c1 complex subunit 3</fullName>
    </alternativeName>
    <alternativeName>
        <fullName>Ubiquinol-cytochrome-c reductase complex cytochrome b subunit</fullName>
    </alternativeName>
</protein>
<sequence>MTNIRKTHPLLKIVNSSFIDLPTPSSISSWWNFGSLLGVCLIMQIATGLFLAMHYTSDTTTAFSSVAHICRDVNYGWLIRYLHANGASMFFICLFLHVGRGIYYGSYMFTETWNIGIILLFATMATAFMGYVLPWGQMSFWGATVITNLLSAIPYIGTTLVEWIWGGFSVDKATLTRFFTFHFILPFIITALAMVHLLFLHETGSNNPSGLNSDADKIPFHPYFTIKDVLGILVLLTILTAFTLFVPDLLGDPDNYISANPLNTPPHIKPEWYFLFAYAILRSIPNKLGGVLALILSILILAIFPLLHTSKQRSLMFRPITQVLYWILVADLFTLTWIGGQPVEHPFIIIGQLASILYFSIILIMMPISGIIENKILKLN</sequence>
<geneLocation type="mitochondrion"/>
<proteinExistence type="inferred from homology"/>
<organism>
    <name type="scientific">Brachytarsomys albicauda</name>
    <name type="common">White-tailed rat</name>
    <dbReference type="NCBI Taxonomy" id="107270"/>
    <lineage>
        <taxon>Eukaryota</taxon>
        <taxon>Metazoa</taxon>
        <taxon>Chordata</taxon>
        <taxon>Craniata</taxon>
        <taxon>Vertebrata</taxon>
        <taxon>Euteleostomi</taxon>
        <taxon>Mammalia</taxon>
        <taxon>Eutheria</taxon>
        <taxon>Euarchontoglires</taxon>
        <taxon>Glires</taxon>
        <taxon>Rodentia</taxon>
        <taxon>Myomorpha</taxon>
        <taxon>Muroidea</taxon>
        <taxon>Nesomyidae</taxon>
        <taxon>Nesomyinae</taxon>
        <taxon>Brachytarsomys</taxon>
    </lineage>
</organism>
<keyword id="KW-0249">Electron transport</keyword>
<keyword id="KW-0349">Heme</keyword>
<keyword id="KW-0408">Iron</keyword>
<keyword id="KW-0472">Membrane</keyword>
<keyword id="KW-0479">Metal-binding</keyword>
<keyword id="KW-0496">Mitochondrion</keyword>
<keyword id="KW-0999">Mitochondrion inner membrane</keyword>
<keyword id="KW-0679">Respiratory chain</keyword>
<keyword id="KW-0812">Transmembrane</keyword>
<keyword id="KW-1133">Transmembrane helix</keyword>
<keyword id="KW-0813">Transport</keyword>
<keyword id="KW-0830">Ubiquinone</keyword>